<feature type="signal peptide" evidence="1">
    <location>
        <begin position="1"/>
        <end position="28"/>
    </location>
</feature>
<feature type="chain" id="PRO_5004331318" description="Ferric enterobactin receptor PirA" evidence="1">
    <location>
        <begin position="29"/>
        <end position="742"/>
    </location>
</feature>
<feature type="domain" description="TBDR plug" evidence="2">
    <location>
        <begin position="57"/>
        <end position="184"/>
    </location>
</feature>
<feature type="domain" description="TBDR beta-barrel" evidence="2">
    <location>
        <begin position="189"/>
        <end position="742"/>
    </location>
</feature>
<feature type="region of interest" description="Disordered" evidence="3">
    <location>
        <begin position="91"/>
        <end position="112"/>
    </location>
</feature>
<feature type="region of interest" description="Disordered" evidence="3">
    <location>
        <begin position="409"/>
        <end position="435"/>
    </location>
</feature>
<feature type="short sequence motif" description="TonB C-terminal box" evidence="2">
    <location>
        <begin position="725"/>
        <end position="742"/>
    </location>
</feature>
<feature type="compositionally biased region" description="Polar residues" evidence="3">
    <location>
        <begin position="94"/>
        <end position="108"/>
    </location>
</feature>
<feature type="disulfide bond" evidence="5 12">
    <location>
        <begin position="516"/>
        <end position="525"/>
    </location>
</feature>
<feature type="strand" evidence="13">
    <location>
        <begin position="65"/>
        <end position="69"/>
    </location>
</feature>
<feature type="helix" evidence="13">
    <location>
        <begin position="70"/>
        <end position="75"/>
    </location>
</feature>
<feature type="helix" evidence="13">
    <location>
        <begin position="83"/>
        <end position="86"/>
    </location>
</feature>
<feature type="strand" evidence="13">
    <location>
        <begin position="92"/>
        <end position="94"/>
    </location>
</feature>
<feature type="strand" evidence="13">
    <location>
        <begin position="109"/>
        <end position="111"/>
    </location>
</feature>
<feature type="helix" evidence="13">
    <location>
        <begin position="116"/>
        <end position="118"/>
    </location>
</feature>
<feature type="strand" evidence="13">
    <location>
        <begin position="119"/>
        <end position="123"/>
    </location>
</feature>
<feature type="helix" evidence="13">
    <location>
        <begin position="153"/>
        <end position="155"/>
    </location>
</feature>
<feature type="strand" evidence="13">
    <location>
        <begin position="156"/>
        <end position="164"/>
    </location>
</feature>
<feature type="helix" evidence="13">
    <location>
        <begin position="165"/>
        <end position="170"/>
    </location>
</feature>
<feature type="strand" evidence="13">
    <location>
        <begin position="175"/>
        <end position="183"/>
    </location>
</feature>
<feature type="strand" evidence="13">
    <location>
        <begin position="191"/>
        <end position="203"/>
    </location>
</feature>
<feature type="strand" evidence="13">
    <location>
        <begin position="209"/>
        <end position="235"/>
    </location>
</feature>
<feature type="strand" evidence="13">
    <location>
        <begin position="260"/>
        <end position="274"/>
    </location>
</feature>
<feature type="strand" evidence="13">
    <location>
        <begin position="277"/>
        <end position="289"/>
    </location>
</feature>
<feature type="strand" evidence="13">
    <location>
        <begin position="317"/>
        <end position="331"/>
    </location>
</feature>
<feature type="strand" evidence="13">
    <location>
        <begin position="334"/>
        <end position="348"/>
    </location>
</feature>
<feature type="strand" evidence="13">
    <location>
        <begin position="370"/>
        <end position="386"/>
    </location>
</feature>
<feature type="strand" evidence="13">
    <location>
        <begin position="388"/>
        <end position="390"/>
    </location>
</feature>
<feature type="strand" evidence="13">
    <location>
        <begin position="392"/>
        <end position="406"/>
    </location>
</feature>
<feature type="strand" evidence="13">
    <location>
        <begin position="433"/>
        <end position="450"/>
    </location>
</feature>
<feature type="strand" evidence="13">
    <location>
        <begin position="453"/>
        <end position="464"/>
    </location>
</feature>
<feature type="turn" evidence="13">
    <location>
        <begin position="465"/>
        <end position="467"/>
    </location>
</feature>
<feature type="strand" evidence="13">
    <location>
        <begin position="468"/>
        <end position="480"/>
    </location>
</feature>
<feature type="strand" evidence="13">
    <location>
        <begin position="482"/>
        <end position="496"/>
    </location>
</feature>
<feature type="turn" evidence="13">
    <location>
        <begin position="500"/>
        <end position="502"/>
    </location>
</feature>
<feature type="helix" evidence="13">
    <location>
        <begin position="513"/>
        <end position="515"/>
    </location>
</feature>
<feature type="strand" evidence="13">
    <location>
        <begin position="516"/>
        <end position="518"/>
    </location>
</feature>
<feature type="strand" evidence="13">
    <location>
        <begin position="536"/>
        <end position="549"/>
    </location>
</feature>
<feature type="strand" evidence="13">
    <location>
        <begin position="552"/>
        <end position="563"/>
    </location>
</feature>
<feature type="strand" evidence="13">
    <location>
        <begin position="571"/>
        <end position="575"/>
    </location>
</feature>
<feature type="turn" evidence="13">
    <location>
        <begin position="577"/>
        <end position="580"/>
    </location>
</feature>
<feature type="strand" evidence="13">
    <location>
        <begin position="592"/>
        <end position="606"/>
    </location>
</feature>
<feature type="strand" evidence="13">
    <location>
        <begin position="609"/>
        <end position="620"/>
    </location>
</feature>
<feature type="strand" evidence="13">
    <location>
        <begin position="635"/>
        <end position="644"/>
    </location>
</feature>
<feature type="strand" evidence="13">
    <location>
        <begin position="647"/>
        <end position="659"/>
    </location>
</feature>
<feature type="strand" evidence="13">
    <location>
        <begin position="684"/>
        <end position="694"/>
    </location>
</feature>
<feature type="strand" evidence="13">
    <location>
        <begin position="696"/>
        <end position="707"/>
    </location>
</feature>
<feature type="strand" evidence="13">
    <location>
        <begin position="733"/>
        <end position="741"/>
    </location>
</feature>
<dbReference type="EMBL" id="AE004091">
    <property type="protein sequence ID" value="AAG04320.1"/>
    <property type="molecule type" value="Genomic_DNA"/>
</dbReference>
<dbReference type="PIR" id="H83529">
    <property type="entry name" value="H83529"/>
</dbReference>
<dbReference type="RefSeq" id="NP_249622.1">
    <property type="nucleotide sequence ID" value="NC_002516.2"/>
</dbReference>
<dbReference type="RefSeq" id="WP_003112590.1">
    <property type="nucleotide sequence ID" value="NZ_QZGE01000007.1"/>
</dbReference>
<dbReference type="PDB" id="5FP2">
    <property type="method" value="X-ray"/>
    <property type="resolution" value="2.97 A"/>
    <property type="chains" value="A/B=29-742"/>
</dbReference>
<dbReference type="PDBsum" id="5FP2"/>
<dbReference type="SMR" id="Q9I527"/>
<dbReference type="STRING" id="208964.PA0931"/>
<dbReference type="PaxDb" id="208964-PA0931"/>
<dbReference type="DNASU" id="881093"/>
<dbReference type="GeneID" id="881093"/>
<dbReference type="KEGG" id="pae:PA0931"/>
<dbReference type="PATRIC" id="fig|208964.12.peg.966"/>
<dbReference type="PseudoCAP" id="PA0931"/>
<dbReference type="HOGENOM" id="CLU_008287_18_2_6"/>
<dbReference type="InParanoid" id="Q9I527"/>
<dbReference type="OrthoDB" id="9764669at2"/>
<dbReference type="PhylomeDB" id="Q9I527"/>
<dbReference type="BioCyc" id="PAER208964:G1FZ6-951-MONOMER"/>
<dbReference type="Proteomes" id="UP000002438">
    <property type="component" value="Chromosome"/>
</dbReference>
<dbReference type="GO" id="GO:0009279">
    <property type="term" value="C:cell outer membrane"/>
    <property type="evidence" value="ECO:0000318"/>
    <property type="project" value="GO_Central"/>
</dbReference>
<dbReference type="GO" id="GO:0046930">
    <property type="term" value="C:pore complex"/>
    <property type="evidence" value="ECO:0007669"/>
    <property type="project" value="UniProtKB-KW"/>
</dbReference>
<dbReference type="GO" id="GO:0042931">
    <property type="term" value="F:enterobactin transmembrane transporter activity"/>
    <property type="evidence" value="ECO:0000315"/>
    <property type="project" value="PseudoCAP"/>
</dbReference>
<dbReference type="GO" id="GO:0015288">
    <property type="term" value="F:porin activity"/>
    <property type="evidence" value="ECO:0007669"/>
    <property type="project" value="UniProtKB-KW"/>
</dbReference>
<dbReference type="GO" id="GO:0015344">
    <property type="term" value="F:siderophore uptake transmembrane transporter activity"/>
    <property type="evidence" value="ECO:0000315"/>
    <property type="project" value="PseudoCAP"/>
</dbReference>
<dbReference type="GO" id="GO:0038023">
    <property type="term" value="F:signaling receptor activity"/>
    <property type="evidence" value="ECO:0007669"/>
    <property type="project" value="InterPro"/>
</dbReference>
<dbReference type="GO" id="GO:0042930">
    <property type="term" value="P:enterobactin transport"/>
    <property type="evidence" value="ECO:0000315"/>
    <property type="project" value="PseudoCAP"/>
</dbReference>
<dbReference type="GO" id="GO:0006826">
    <property type="term" value="P:iron ion transport"/>
    <property type="evidence" value="ECO:0000315"/>
    <property type="project" value="UniProtKB"/>
</dbReference>
<dbReference type="GO" id="GO:0044718">
    <property type="term" value="P:siderophore transmembrane transport"/>
    <property type="evidence" value="ECO:0000318"/>
    <property type="project" value="GO_Central"/>
</dbReference>
<dbReference type="GO" id="GO:0015891">
    <property type="term" value="P:siderophore transport"/>
    <property type="evidence" value="ECO:0000315"/>
    <property type="project" value="UniProtKB"/>
</dbReference>
<dbReference type="CDD" id="cd01347">
    <property type="entry name" value="ligand_gated_channel"/>
    <property type="match status" value="1"/>
</dbReference>
<dbReference type="FunFam" id="2.40.170.20:FF:000002">
    <property type="entry name" value="Colicin I TonB-dependent receptor"/>
    <property type="match status" value="1"/>
</dbReference>
<dbReference type="Gene3D" id="2.40.170.20">
    <property type="entry name" value="TonB-dependent receptor, beta-barrel domain"/>
    <property type="match status" value="1"/>
</dbReference>
<dbReference type="Gene3D" id="2.170.130.10">
    <property type="entry name" value="TonB-dependent receptor, plug domain"/>
    <property type="match status" value="1"/>
</dbReference>
<dbReference type="InterPro" id="IPR012910">
    <property type="entry name" value="Plug_dom"/>
</dbReference>
<dbReference type="InterPro" id="IPR037066">
    <property type="entry name" value="Plug_dom_sf"/>
</dbReference>
<dbReference type="InterPro" id="IPR039426">
    <property type="entry name" value="TonB-dep_rcpt-like"/>
</dbReference>
<dbReference type="InterPro" id="IPR000531">
    <property type="entry name" value="TonB-dep_rcpt_b-brl"/>
</dbReference>
<dbReference type="InterPro" id="IPR036942">
    <property type="entry name" value="TonB_rcpt_b-brl_sf"/>
</dbReference>
<dbReference type="InterPro" id="IPR010917">
    <property type="entry name" value="TonB_rcpt_CS"/>
</dbReference>
<dbReference type="InterPro" id="IPR010105">
    <property type="entry name" value="TonB_sidphr_rcpt"/>
</dbReference>
<dbReference type="NCBIfam" id="NF010048">
    <property type="entry name" value="PRK13524.1"/>
    <property type="match status" value="1"/>
</dbReference>
<dbReference type="NCBIfam" id="NF010051">
    <property type="entry name" value="PRK13528.1"/>
    <property type="match status" value="1"/>
</dbReference>
<dbReference type="NCBIfam" id="TIGR01783">
    <property type="entry name" value="TonB-siderophor"/>
    <property type="match status" value="1"/>
</dbReference>
<dbReference type="PANTHER" id="PTHR30069">
    <property type="entry name" value="TONB-DEPENDENT OUTER MEMBRANE RECEPTOR"/>
    <property type="match status" value="1"/>
</dbReference>
<dbReference type="PANTHER" id="PTHR30069:SF8">
    <property type="entry name" value="TONB-DEPENDENT SIDEROPHORE RECEPTOR PROTEIN"/>
    <property type="match status" value="1"/>
</dbReference>
<dbReference type="Pfam" id="PF07715">
    <property type="entry name" value="Plug"/>
    <property type="match status" value="1"/>
</dbReference>
<dbReference type="Pfam" id="PF00593">
    <property type="entry name" value="TonB_dep_Rec_b-barrel"/>
    <property type="match status" value="1"/>
</dbReference>
<dbReference type="SUPFAM" id="SSF56935">
    <property type="entry name" value="Porins"/>
    <property type="match status" value="1"/>
</dbReference>
<dbReference type="PROSITE" id="PS01156">
    <property type="entry name" value="TONB_DEPENDENT_REC_2"/>
    <property type="match status" value="1"/>
</dbReference>
<dbReference type="PROSITE" id="PS52016">
    <property type="entry name" value="TONB_DEPENDENT_REC_3"/>
    <property type="match status" value="1"/>
</dbReference>
<accession>Q9I527</accession>
<name>PIRA_PSEAE</name>
<protein>
    <recommendedName>
        <fullName evidence="7">Ferric enterobactin receptor PirA</fullName>
    </recommendedName>
</protein>
<organism evidence="11">
    <name type="scientific">Pseudomonas aeruginosa (strain ATCC 15692 / DSM 22644 / CIP 104116 / JCM 14847 / LMG 12228 / 1C / PRS 101 / PAO1)</name>
    <dbReference type="NCBI Taxonomy" id="208964"/>
    <lineage>
        <taxon>Bacteria</taxon>
        <taxon>Pseudomonadati</taxon>
        <taxon>Pseudomonadota</taxon>
        <taxon>Gammaproteobacteria</taxon>
        <taxon>Pseudomonadales</taxon>
        <taxon>Pseudomonadaceae</taxon>
        <taxon>Pseudomonas</taxon>
    </lineage>
</organism>
<sequence length="742" mass="80908">MYPQFRRGHLAAAVLFASSSLLGGQALAEDERLEELDERAESVVQLGDEVVLGTAEQELKQAPGVSIITAEDIRKRPPVNDLSEIIRTMPGVNLTGNSSSGQRGNNRQIDIRGMGPENTLILVDGKPVSSRNSVRYGWRGERDTRGDSNWVPPEEVERIEVLRGPAAARYGSGAAGGVVNIITKRPTDRLRGSMTVFTNIPESSKDGATRRANFSLSGPLTEALSFRAYGSANKTDSDDTDINLGHTVNPSRTVAGREGVRNRDLSGMLSWQVTPDQVVDFEAGFSRQGNIYAGDTQNNNGTANTQGLADDGAETNRMYRENYAITHNGTWSFGTSRFVAQYDSTRNNRLEEGLAGSVEGQIGADRSFSASKLENYRLSGELNLPLHALFEQVLTVGAEWNKETLNDPSSLKQGFVGSDSLPGTPAAGSRSPKSKAEIRALYVEDNIELRPGTMLTPGLRLDDHSDFGLNWSPSLNASQTLGEYFTVKAGIARAFKAPNLYQSNPNYLLYTRGNGCPIQTSSGGCYLVGNENLDAETSVNKELGIEFRRDGWVAGLTYFRNDYKNKIVAPLDVMGQTGTGNNILQWSNAKKAVVEGLEGNLLVPLHEDLSWSTNLTYMLQSKDKDTGNPLSVIPEYTLNSTLDWQASERLSTQLTSTIYGRQEPPKHGTSRNTPVVSRKEVGTYGIWGVSAGYTFSENLSVRGGVSNLFDKRLYRQGNSFDAGAATYNEPGRAYYVSMTTSF</sequence>
<gene>
    <name evidence="8" type="primary">pirA</name>
    <name evidence="10" type="ordered locus">PA0931</name>
</gene>
<reference evidence="11" key="1">
    <citation type="journal article" date="2000" name="Nature">
        <title>Complete genome sequence of Pseudomonas aeruginosa PAO1, an opportunistic pathogen.</title>
        <authorList>
            <person name="Stover C.K."/>
            <person name="Pham X.-Q.T."/>
            <person name="Erwin A.L."/>
            <person name="Mizoguchi S.D."/>
            <person name="Warrener P."/>
            <person name="Hickey M.J."/>
            <person name="Brinkman F.S.L."/>
            <person name="Hufnagle W.O."/>
            <person name="Kowalik D.J."/>
            <person name="Lagrou M."/>
            <person name="Garber R.L."/>
            <person name="Goltry L."/>
            <person name="Tolentino E."/>
            <person name="Westbrock-Wadman S."/>
            <person name="Yuan Y."/>
            <person name="Brody L.L."/>
            <person name="Coulter S.N."/>
            <person name="Folger K.R."/>
            <person name="Kas A."/>
            <person name="Larbig K."/>
            <person name="Lim R.M."/>
            <person name="Smith K.A."/>
            <person name="Spencer D.H."/>
            <person name="Wong G.K.-S."/>
            <person name="Wu Z."/>
            <person name="Paulsen I.T."/>
            <person name="Reizer J."/>
            <person name="Saier M.H. Jr."/>
            <person name="Hancock R.E.W."/>
            <person name="Lory S."/>
            <person name="Olson M.V."/>
        </authorList>
    </citation>
    <scope>NUCLEOTIDE SEQUENCE [LARGE SCALE GENOMIC DNA]</scope>
    <source>
        <strain evidence="11">ATCC 15692 / DSM 22644 / CIP 104116 / JCM 14847 / LMG 12228 / 1C / PRS 101 / PAO1</strain>
    </source>
</reference>
<reference evidence="9" key="2">
    <citation type="journal article" date="2005" name="FEMS Microbiol. Lett.">
        <title>The Pseudomonas aeruginosa pirA gene encodes a second receptor for ferrienterobactin and synthetic catecholate analogues.</title>
        <authorList>
            <person name="Ghysels B."/>
            <person name="Ochsner U."/>
            <person name="Moellman U."/>
            <person name="Heinisch L."/>
            <person name="Vasil M."/>
            <person name="Cornelis P."/>
            <person name="Matthijs S."/>
        </authorList>
    </citation>
    <scope>FUNCTION</scope>
    <scope>DISRUPTION PHENOTYPE</scope>
</reference>
<reference evidence="9" key="3">
    <citation type="journal article" date="2022" name="Environ. Microbiol.">
        <title>Opportunistic use of catecholamine neurotransmitters as siderophores to access iron by Pseudomonas aeruginosa.</title>
        <authorList>
            <person name="Perraud Q."/>
            <person name="Kuhn L."/>
            <person name="Fritsch S."/>
            <person name="Graulier G."/>
            <person name="Gasser V."/>
            <person name="Normant V."/>
            <person name="Hammann P."/>
            <person name="Schalk I.J."/>
        </authorList>
    </citation>
    <scope>FUNCTION</scope>
    <scope>DISRUPTION PHENOTYPE</scope>
</reference>
<reference evidence="12" key="4">
    <citation type="journal article" date="2017" name="Antimicrob. Agents Chemother.">
        <title>Structure and Function of the PiuA and PirA Siderophore-Drug Receptors from Pseudomonas aeruginosa and Acinetobacter baumannii.</title>
        <authorList>
            <person name="Moynie L."/>
            <person name="Luscher A."/>
            <person name="Rolo D."/>
            <person name="Pletzer D."/>
            <person name="Tortajada A."/>
            <person name="Weingart H."/>
            <person name="Braun Y."/>
            <person name="Page M.G."/>
            <person name="Naismith J.H."/>
            <person name="Kohler T."/>
        </authorList>
    </citation>
    <scope>X-RAY CRYSTALLOGRAPHY (2.97 ANGSTROMS) OF 29-742</scope>
    <scope>DISRUPTION PHENOTYPE</scope>
    <scope>DISULFIDE BOND</scope>
</reference>
<comment type="function">
    <text evidence="4 6">Specific receptor for the siderophore ferric enterobactin (PubMed:15899402). Probably involved in the transport of siderophores, including host catecholamines such as L-DOPA (PubMed:33350053).</text>
</comment>
<comment type="subcellular location">
    <subcellularLocation>
        <location evidence="2">Cell outer membrane</location>
        <topology evidence="2">Multi-pass membrane protein</topology>
    </subcellularLocation>
</comment>
<comment type="disruption phenotype">
    <text evidence="4 5 6">Deletion decreases sensitivity to siderophore-beta-lactam drug conjugates (PubMed:28137795). In a pvdD and pchEF double mutant background, in iron restricted culture, able to grow in the presence of enterobactin or various synthetic catecholates, but fails to grow when enterobactin receptor pfeA is also deleted (PubMed:15899402). In a pvdF and pchA double mutant background, in iron restricted culture, growth inhibited by 60% in the presence of dopamine and delayed in the presence of other catecholamines such as epinephrine; growth is inhibited further, but not completely abolished, when piuA is aso deleted (PubMed:33350053).</text>
</comment>
<comment type="similarity">
    <text evidence="9">Belongs to the TonB-dependent receptor family.</text>
</comment>
<evidence type="ECO:0000255" key="1"/>
<evidence type="ECO:0000255" key="2">
    <source>
        <dbReference type="PROSITE-ProRule" id="PRU01360"/>
    </source>
</evidence>
<evidence type="ECO:0000256" key="3">
    <source>
        <dbReference type="SAM" id="MobiDB-lite"/>
    </source>
</evidence>
<evidence type="ECO:0000269" key="4">
    <source>
    </source>
</evidence>
<evidence type="ECO:0000269" key="5">
    <source>
    </source>
</evidence>
<evidence type="ECO:0000269" key="6">
    <source>
    </source>
</evidence>
<evidence type="ECO:0000303" key="7">
    <source>
    </source>
</evidence>
<evidence type="ECO:0000303" key="8">
    <source>
    </source>
</evidence>
<evidence type="ECO:0000305" key="9"/>
<evidence type="ECO:0000312" key="10">
    <source>
        <dbReference type="EMBL" id="AAG04320.1"/>
    </source>
</evidence>
<evidence type="ECO:0000312" key="11">
    <source>
        <dbReference type="Proteomes" id="UP000002438"/>
    </source>
</evidence>
<evidence type="ECO:0007744" key="12">
    <source>
        <dbReference type="PDB" id="5FP2"/>
    </source>
</evidence>
<evidence type="ECO:0007829" key="13">
    <source>
        <dbReference type="PDB" id="5FP2"/>
    </source>
</evidence>
<keyword id="KW-0002">3D-structure</keyword>
<keyword id="KW-0998">Cell outer membrane</keyword>
<keyword id="KW-1015">Disulfide bond</keyword>
<keyword id="KW-0406">Ion transport</keyword>
<keyword id="KW-0408">Iron</keyword>
<keyword id="KW-0410">Iron transport</keyword>
<keyword id="KW-0472">Membrane</keyword>
<keyword id="KW-0626">Porin</keyword>
<keyword id="KW-0675">Receptor</keyword>
<keyword id="KW-1185">Reference proteome</keyword>
<keyword id="KW-0732">Signal</keyword>
<keyword id="KW-0798">TonB box</keyword>
<keyword id="KW-0812">Transmembrane</keyword>
<keyword id="KW-1134">Transmembrane beta strand</keyword>
<keyword id="KW-0813">Transport</keyword>
<proteinExistence type="evidence at protein level"/>